<keyword id="KW-0071">Autoinducer synthesis</keyword>
<keyword id="KW-0408">Iron</keyword>
<keyword id="KW-0456">Lyase</keyword>
<keyword id="KW-0479">Metal-binding</keyword>
<keyword id="KW-0673">Quorum sensing</keyword>
<proteinExistence type="inferred from homology"/>
<comment type="function">
    <text evidence="1">Involved in the synthesis of autoinducer 2 (AI-2) which is secreted by bacteria and is used to communicate both the cell density and the metabolic potential of the environment. The regulation of gene expression in response to changes in cell density is called quorum sensing. Catalyzes the transformation of S-ribosylhomocysteine (RHC) to homocysteine (HC) and 4,5-dihydroxy-2,3-pentadione (DPD).</text>
</comment>
<comment type="catalytic activity">
    <reaction evidence="1">
        <text>S-(5-deoxy-D-ribos-5-yl)-L-homocysteine = (S)-4,5-dihydroxypentane-2,3-dione + L-homocysteine</text>
        <dbReference type="Rhea" id="RHEA:17753"/>
        <dbReference type="ChEBI" id="CHEBI:29484"/>
        <dbReference type="ChEBI" id="CHEBI:58195"/>
        <dbReference type="ChEBI" id="CHEBI:58199"/>
        <dbReference type="EC" id="4.4.1.21"/>
    </reaction>
</comment>
<comment type="cofactor">
    <cofactor evidence="1">
        <name>Fe cation</name>
        <dbReference type="ChEBI" id="CHEBI:24875"/>
    </cofactor>
    <text evidence="1">Binds 1 Fe cation per subunit.</text>
</comment>
<comment type="subunit">
    <text evidence="1">Homodimer.</text>
</comment>
<comment type="similarity">
    <text evidence="1">Belongs to the LuxS family.</text>
</comment>
<protein>
    <recommendedName>
        <fullName evidence="1">S-ribosylhomocysteine lyase 2</fullName>
        <ecNumber evidence="1">4.4.1.21</ecNumber>
    </recommendedName>
    <alternativeName>
        <fullName evidence="1">AI-2 synthesis protein 2</fullName>
    </alternativeName>
    <alternativeName>
        <fullName evidence="1">Autoinducer-2 production protein LuxS 2</fullName>
    </alternativeName>
</protein>
<accession>Q049W0</accession>
<reference key="1">
    <citation type="journal article" date="2006" name="Proc. Natl. Acad. Sci. U.S.A.">
        <title>Comparative genomics of the lactic acid bacteria.</title>
        <authorList>
            <person name="Makarova K.S."/>
            <person name="Slesarev A."/>
            <person name="Wolf Y.I."/>
            <person name="Sorokin A."/>
            <person name="Mirkin B."/>
            <person name="Koonin E.V."/>
            <person name="Pavlov A."/>
            <person name="Pavlova N."/>
            <person name="Karamychev V."/>
            <person name="Polouchine N."/>
            <person name="Shakhova V."/>
            <person name="Grigoriev I."/>
            <person name="Lou Y."/>
            <person name="Rohksar D."/>
            <person name="Lucas S."/>
            <person name="Huang K."/>
            <person name="Goodstein D.M."/>
            <person name="Hawkins T."/>
            <person name="Plengvidhya V."/>
            <person name="Welker D."/>
            <person name="Hughes J."/>
            <person name="Goh Y."/>
            <person name="Benson A."/>
            <person name="Baldwin K."/>
            <person name="Lee J.-H."/>
            <person name="Diaz-Muniz I."/>
            <person name="Dosti B."/>
            <person name="Smeianov V."/>
            <person name="Wechter W."/>
            <person name="Barabote R."/>
            <person name="Lorca G."/>
            <person name="Altermann E."/>
            <person name="Barrangou R."/>
            <person name="Ganesan B."/>
            <person name="Xie Y."/>
            <person name="Rawsthorne H."/>
            <person name="Tamir D."/>
            <person name="Parker C."/>
            <person name="Breidt F."/>
            <person name="Broadbent J.R."/>
            <person name="Hutkins R."/>
            <person name="O'Sullivan D."/>
            <person name="Steele J."/>
            <person name="Unlu G."/>
            <person name="Saier M.H. Jr."/>
            <person name="Klaenhammer T."/>
            <person name="Richardson P."/>
            <person name="Kozyavkin S."/>
            <person name="Weimer B.C."/>
            <person name="Mills D.A."/>
        </authorList>
    </citation>
    <scope>NUCLEOTIDE SEQUENCE [LARGE SCALE GENOMIC DNA]</scope>
    <source>
        <strain>ATCC BAA-365 / Lb-18</strain>
    </source>
</reference>
<sequence length="157" mass="17511">MAKVESFTLDHTKVKAPYVRLITEETGKKGDVISNYDLRLVQPNTNAIPTAGLHTIEHLLAGLLRDRLDGVIDCSPFGCRTGFHLITWGEHSTTEVAKALKGSLDAIANDIEWKDVQGTDKYSCGNYRDHSLFSAKEWSKEILSQGISDQPFERHVI</sequence>
<evidence type="ECO:0000255" key="1">
    <source>
        <dbReference type="HAMAP-Rule" id="MF_00091"/>
    </source>
</evidence>
<dbReference type="EC" id="4.4.1.21" evidence="1"/>
<dbReference type="EMBL" id="CP000412">
    <property type="protein sequence ID" value="ABJ58762.1"/>
    <property type="molecule type" value="Genomic_DNA"/>
</dbReference>
<dbReference type="RefSeq" id="WP_003618609.1">
    <property type="nucleotide sequence ID" value="NC_008529.1"/>
</dbReference>
<dbReference type="SMR" id="Q049W0"/>
<dbReference type="KEGG" id="lbu:LBUL_1233"/>
<dbReference type="HOGENOM" id="CLU_107531_2_1_9"/>
<dbReference type="BioCyc" id="LDEL321956:LBUL_RS05775-MONOMER"/>
<dbReference type="GO" id="GO:0005506">
    <property type="term" value="F:iron ion binding"/>
    <property type="evidence" value="ECO:0007669"/>
    <property type="project" value="InterPro"/>
</dbReference>
<dbReference type="GO" id="GO:0043768">
    <property type="term" value="F:S-ribosylhomocysteine lyase activity"/>
    <property type="evidence" value="ECO:0007669"/>
    <property type="project" value="UniProtKB-UniRule"/>
</dbReference>
<dbReference type="GO" id="GO:0009372">
    <property type="term" value="P:quorum sensing"/>
    <property type="evidence" value="ECO:0007669"/>
    <property type="project" value="UniProtKB-UniRule"/>
</dbReference>
<dbReference type="Gene3D" id="3.30.1360.80">
    <property type="entry name" value="S-ribosylhomocysteinase (LuxS)"/>
    <property type="match status" value="1"/>
</dbReference>
<dbReference type="HAMAP" id="MF_00091">
    <property type="entry name" value="LuxS"/>
    <property type="match status" value="1"/>
</dbReference>
<dbReference type="InterPro" id="IPR037005">
    <property type="entry name" value="LuxS_sf"/>
</dbReference>
<dbReference type="InterPro" id="IPR011249">
    <property type="entry name" value="Metalloenz_LuxS/M16"/>
</dbReference>
<dbReference type="InterPro" id="IPR003815">
    <property type="entry name" value="S-ribosylhomocysteinase"/>
</dbReference>
<dbReference type="NCBIfam" id="NF002606">
    <property type="entry name" value="PRK02260.2-4"/>
    <property type="match status" value="1"/>
</dbReference>
<dbReference type="NCBIfam" id="NF002608">
    <property type="entry name" value="PRK02260.3-1"/>
    <property type="match status" value="1"/>
</dbReference>
<dbReference type="PANTHER" id="PTHR35799">
    <property type="entry name" value="S-RIBOSYLHOMOCYSTEINE LYASE"/>
    <property type="match status" value="1"/>
</dbReference>
<dbReference type="PANTHER" id="PTHR35799:SF1">
    <property type="entry name" value="S-RIBOSYLHOMOCYSTEINE LYASE"/>
    <property type="match status" value="1"/>
</dbReference>
<dbReference type="Pfam" id="PF02664">
    <property type="entry name" value="LuxS"/>
    <property type="match status" value="1"/>
</dbReference>
<dbReference type="PIRSF" id="PIRSF006160">
    <property type="entry name" value="AI2"/>
    <property type="match status" value="1"/>
</dbReference>
<dbReference type="PRINTS" id="PR01487">
    <property type="entry name" value="LUXSPROTEIN"/>
</dbReference>
<dbReference type="SUPFAM" id="SSF63411">
    <property type="entry name" value="LuxS/MPP-like metallohydrolase"/>
    <property type="match status" value="1"/>
</dbReference>
<feature type="chain" id="PRO_0000298008" description="S-ribosylhomocysteine lyase 2">
    <location>
        <begin position="1"/>
        <end position="157"/>
    </location>
</feature>
<feature type="binding site" evidence="1">
    <location>
        <position position="54"/>
    </location>
    <ligand>
        <name>Fe cation</name>
        <dbReference type="ChEBI" id="CHEBI:24875"/>
    </ligand>
</feature>
<feature type="binding site" evidence="1">
    <location>
        <position position="58"/>
    </location>
    <ligand>
        <name>Fe cation</name>
        <dbReference type="ChEBI" id="CHEBI:24875"/>
    </ligand>
</feature>
<feature type="binding site" evidence="1">
    <location>
        <position position="124"/>
    </location>
    <ligand>
        <name>Fe cation</name>
        <dbReference type="ChEBI" id="CHEBI:24875"/>
    </ligand>
</feature>
<organism>
    <name type="scientific">Lactobacillus delbrueckii subsp. bulgaricus (strain ATCC BAA-365 / Lb-18)</name>
    <dbReference type="NCBI Taxonomy" id="321956"/>
    <lineage>
        <taxon>Bacteria</taxon>
        <taxon>Bacillati</taxon>
        <taxon>Bacillota</taxon>
        <taxon>Bacilli</taxon>
        <taxon>Lactobacillales</taxon>
        <taxon>Lactobacillaceae</taxon>
        <taxon>Lactobacillus</taxon>
    </lineage>
</organism>
<name>LUXS2_LACDB</name>
<gene>
    <name evidence="1" type="primary">luxS2</name>
    <name type="ordered locus">LBUL_1233</name>
</gene>